<sequence length="296" mass="31055">MDRKATVIDGKLAAQHVKDSLRTRVAALEAIGQRPGLGTILVGDDAGSQSYVAGKHRDCAEVGIDSFRIDMSAEASQERVLDAVGRLNEDERCSGFIVQLPLPAHIDMHLVLNAIDPEKDADGLHPVNLGRLVLNQEGTLPCTPRGILELLRGNDVPITGSQFCVIGCGTTVGRPLGLMLTRPSEHATVTMVNEATIDVAAHTRVADVVIAAAGVANLVKPYWIKPGATVLSVGITRTVEGILGDVDPGVENVAGKWTRAAGGVGPMTRAMLLKNVVELAERAAGITSEASTKIAS</sequence>
<comment type="function">
    <text evidence="1">Catalyzes the oxidation of 5,10-methylenetetrahydrofolate to 5,10-methenyltetrahydrofolate and then the hydrolysis of 5,10-methenyltetrahydrofolate to 10-formyltetrahydrofolate.</text>
</comment>
<comment type="catalytic activity">
    <reaction evidence="1">
        <text>(6R)-5,10-methylene-5,6,7,8-tetrahydrofolate + NADP(+) = (6R)-5,10-methenyltetrahydrofolate + NADPH</text>
        <dbReference type="Rhea" id="RHEA:22812"/>
        <dbReference type="ChEBI" id="CHEBI:15636"/>
        <dbReference type="ChEBI" id="CHEBI:57455"/>
        <dbReference type="ChEBI" id="CHEBI:57783"/>
        <dbReference type="ChEBI" id="CHEBI:58349"/>
        <dbReference type="EC" id="1.5.1.5"/>
    </reaction>
</comment>
<comment type="catalytic activity">
    <reaction evidence="1">
        <text>(6R)-5,10-methenyltetrahydrofolate + H2O = (6R)-10-formyltetrahydrofolate + H(+)</text>
        <dbReference type="Rhea" id="RHEA:23700"/>
        <dbReference type="ChEBI" id="CHEBI:15377"/>
        <dbReference type="ChEBI" id="CHEBI:15378"/>
        <dbReference type="ChEBI" id="CHEBI:57455"/>
        <dbReference type="ChEBI" id="CHEBI:195366"/>
        <dbReference type="EC" id="3.5.4.9"/>
    </reaction>
</comment>
<comment type="pathway">
    <text evidence="1">One-carbon metabolism; tetrahydrofolate interconversion.</text>
</comment>
<comment type="subunit">
    <text evidence="1">Homodimer.</text>
</comment>
<comment type="similarity">
    <text evidence="1">Belongs to the tetrahydrofolate dehydrogenase/cyclohydrolase family.</text>
</comment>
<evidence type="ECO:0000255" key="1">
    <source>
        <dbReference type="HAMAP-Rule" id="MF_01576"/>
    </source>
</evidence>
<keyword id="KW-0028">Amino-acid biosynthesis</keyword>
<keyword id="KW-0368">Histidine biosynthesis</keyword>
<keyword id="KW-0378">Hydrolase</keyword>
<keyword id="KW-0486">Methionine biosynthesis</keyword>
<keyword id="KW-0511">Multifunctional enzyme</keyword>
<keyword id="KW-0521">NADP</keyword>
<keyword id="KW-0554">One-carbon metabolism</keyword>
<keyword id="KW-0560">Oxidoreductase</keyword>
<keyword id="KW-0658">Purine biosynthesis</keyword>
<keyword id="KW-1185">Reference proteome</keyword>
<protein>
    <recommendedName>
        <fullName evidence="1">Bifunctional protein FolD 1</fullName>
    </recommendedName>
    <domain>
        <recommendedName>
            <fullName evidence="1">Methylenetetrahydrofolate dehydrogenase</fullName>
            <ecNumber evidence="1">1.5.1.5</ecNumber>
        </recommendedName>
    </domain>
    <domain>
        <recommendedName>
            <fullName evidence="1">Methenyltetrahydrofolate cyclohydrolase</fullName>
            <ecNumber evidence="1">3.5.4.9</ecNumber>
        </recommendedName>
    </domain>
</protein>
<reference key="1">
    <citation type="submission" date="2006-12" db="EMBL/GenBank/DDBJ databases">
        <title>Complete sequence of chromosome 1 of Nocardioides sp. JS614.</title>
        <authorList>
            <person name="Copeland A."/>
            <person name="Lucas S."/>
            <person name="Lapidus A."/>
            <person name="Barry K."/>
            <person name="Detter J.C."/>
            <person name="Glavina del Rio T."/>
            <person name="Hammon N."/>
            <person name="Israni S."/>
            <person name="Dalin E."/>
            <person name="Tice H."/>
            <person name="Pitluck S."/>
            <person name="Thompson L.S."/>
            <person name="Brettin T."/>
            <person name="Bruce D."/>
            <person name="Han C."/>
            <person name="Tapia R."/>
            <person name="Schmutz J."/>
            <person name="Larimer F."/>
            <person name="Land M."/>
            <person name="Hauser L."/>
            <person name="Kyrpides N."/>
            <person name="Kim E."/>
            <person name="Mattes T."/>
            <person name="Gossett J."/>
            <person name="Richardson P."/>
        </authorList>
    </citation>
    <scope>NUCLEOTIDE SEQUENCE [LARGE SCALE GENOMIC DNA]</scope>
    <source>
        <strain>ATCC BAA-499 / JS614</strain>
    </source>
</reference>
<organism>
    <name type="scientific">Nocardioides sp. (strain ATCC BAA-499 / JS614)</name>
    <dbReference type="NCBI Taxonomy" id="196162"/>
    <lineage>
        <taxon>Bacteria</taxon>
        <taxon>Bacillati</taxon>
        <taxon>Actinomycetota</taxon>
        <taxon>Actinomycetes</taxon>
        <taxon>Propionibacteriales</taxon>
        <taxon>Nocardioidaceae</taxon>
        <taxon>Nocardioides</taxon>
    </lineage>
</organism>
<gene>
    <name evidence="1" type="primary">folD1</name>
    <name type="ordered locus">Noca_0641</name>
</gene>
<feature type="chain" id="PRO_0000305853" description="Bifunctional protein FolD 1">
    <location>
        <begin position="1"/>
        <end position="296"/>
    </location>
</feature>
<feature type="binding site" evidence="1">
    <location>
        <begin position="167"/>
        <end position="169"/>
    </location>
    <ligand>
        <name>NADP(+)</name>
        <dbReference type="ChEBI" id="CHEBI:58349"/>
    </ligand>
</feature>
<feature type="binding site" evidence="1">
    <location>
        <position position="235"/>
    </location>
    <ligand>
        <name>NADP(+)</name>
        <dbReference type="ChEBI" id="CHEBI:58349"/>
    </ligand>
</feature>
<name>FOLD1_NOCSJ</name>
<dbReference type="EC" id="1.5.1.5" evidence="1"/>
<dbReference type="EC" id="3.5.4.9" evidence="1"/>
<dbReference type="EMBL" id="CP000509">
    <property type="protein sequence ID" value="ABL80167.1"/>
    <property type="molecule type" value="Genomic_DNA"/>
</dbReference>
<dbReference type="RefSeq" id="WP_011754116.1">
    <property type="nucleotide sequence ID" value="NC_008699.1"/>
</dbReference>
<dbReference type="SMR" id="A1SED2"/>
<dbReference type="STRING" id="196162.Noca_0641"/>
<dbReference type="KEGG" id="nca:Noca_0641"/>
<dbReference type="eggNOG" id="COG0190">
    <property type="taxonomic scope" value="Bacteria"/>
</dbReference>
<dbReference type="HOGENOM" id="CLU_034045_3_0_11"/>
<dbReference type="OrthoDB" id="9803580at2"/>
<dbReference type="UniPathway" id="UPA00193"/>
<dbReference type="Proteomes" id="UP000000640">
    <property type="component" value="Chromosome"/>
</dbReference>
<dbReference type="GO" id="GO:0005829">
    <property type="term" value="C:cytosol"/>
    <property type="evidence" value="ECO:0007669"/>
    <property type="project" value="TreeGrafter"/>
</dbReference>
<dbReference type="GO" id="GO:0004477">
    <property type="term" value="F:methenyltetrahydrofolate cyclohydrolase activity"/>
    <property type="evidence" value="ECO:0007669"/>
    <property type="project" value="UniProtKB-UniRule"/>
</dbReference>
<dbReference type="GO" id="GO:0004488">
    <property type="term" value="F:methylenetetrahydrofolate dehydrogenase (NADP+) activity"/>
    <property type="evidence" value="ECO:0007669"/>
    <property type="project" value="UniProtKB-UniRule"/>
</dbReference>
<dbReference type="GO" id="GO:0000105">
    <property type="term" value="P:L-histidine biosynthetic process"/>
    <property type="evidence" value="ECO:0007669"/>
    <property type="project" value="UniProtKB-KW"/>
</dbReference>
<dbReference type="GO" id="GO:0009086">
    <property type="term" value="P:methionine biosynthetic process"/>
    <property type="evidence" value="ECO:0007669"/>
    <property type="project" value="UniProtKB-KW"/>
</dbReference>
<dbReference type="GO" id="GO:0006164">
    <property type="term" value="P:purine nucleotide biosynthetic process"/>
    <property type="evidence" value="ECO:0007669"/>
    <property type="project" value="UniProtKB-KW"/>
</dbReference>
<dbReference type="GO" id="GO:0035999">
    <property type="term" value="P:tetrahydrofolate interconversion"/>
    <property type="evidence" value="ECO:0007669"/>
    <property type="project" value="UniProtKB-UniRule"/>
</dbReference>
<dbReference type="CDD" id="cd01080">
    <property type="entry name" value="NAD_bind_m-THF_DH_Cyclohyd"/>
    <property type="match status" value="1"/>
</dbReference>
<dbReference type="FunFam" id="3.40.50.10860:FF:000005">
    <property type="entry name" value="C-1-tetrahydrofolate synthase, cytoplasmic, putative"/>
    <property type="match status" value="1"/>
</dbReference>
<dbReference type="Gene3D" id="3.40.50.10860">
    <property type="entry name" value="Leucine Dehydrogenase, chain A, domain 1"/>
    <property type="match status" value="1"/>
</dbReference>
<dbReference type="Gene3D" id="3.40.50.720">
    <property type="entry name" value="NAD(P)-binding Rossmann-like Domain"/>
    <property type="match status" value="1"/>
</dbReference>
<dbReference type="HAMAP" id="MF_01576">
    <property type="entry name" value="THF_DHG_CYH"/>
    <property type="match status" value="1"/>
</dbReference>
<dbReference type="InterPro" id="IPR046346">
    <property type="entry name" value="Aminoacid_DH-like_N_sf"/>
</dbReference>
<dbReference type="InterPro" id="IPR036291">
    <property type="entry name" value="NAD(P)-bd_dom_sf"/>
</dbReference>
<dbReference type="InterPro" id="IPR000672">
    <property type="entry name" value="THF_DH/CycHdrlase"/>
</dbReference>
<dbReference type="InterPro" id="IPR020630">
    <property type="entry name" value="THF_DH/CycHdrlase_cat_dom"/>
</dbReference>
<dbReference type="InterPro" id="IPR020631">
    <property type="entry name" value="THF_DH/CycHdrlase_NAD-bd_dom"/>
</dbReference>
<dbReference type="PANTHER" id="PTHR48099:SF5">
    <property type="entry name" value="C-1-TETRAHYDROFOLATE SYNTHASE, CYTOPLASMIC"/>
    <property type="match status" value="1"/>
</dbReference>
<dbReference type="PANTHER" id="PTHR48099">
    <property type="entry name" value="C-1-TETRAHYDROFOLATE SYNTHASE, CYTOPLASMIC-RELATED"/>
    <property type="match status" value="1"/>
</dbReference>
<dbReference type="Pfam" id="PF00763">
    <property type="entry name" value="THF_DHG_CYH"/>
    <property type="match status" value="1"/>
</dbReference>
<dbReference type="Pfam" id="PF02882">
    <property type="entry name" value="THF_DHG_CYH_C"/>
    <property type="match status" value="1"/>
</dbReference>
<dbReference type="PRINTS" id="PR00085">
    <property type="entry name" value="THFDHDRGNASE"/>
</dbReference>
<dbReference type="SUPFAM" id="SSF53223">
    <property type="entry name" value="Aminoacid dehydrogenase-like, N-terminal domain"/>
    <property type="match status" value="1"/>
</dbReference>
<dbReference type="SUPFAM" id="SSF51735">
    <property type="entry name" value="NAD(P)-binding Rossmann-fold domains"/>
    <property type="match status" value="1"/>
</dbReference>
<proteinExistence type="inferred from homology"/>
<accession>A1SED2</accession>